<comment type="function">
    <text evidence="1">Monomeric heme protein which primary function is to store oxygen and facilitate its diffusion within muscle tissues. Reversibly binds oxygen through a pentacoordinated heme iron and enables its timely and efficient release as needed during periods of heightened demand. Depending on the oxidative conditions of tissues and cells, and in addition to its ability to bind oxygen, it also has a nitrite reductase activity whereby it regulates the production of bioactive nitric oxide. Under stress conditions, like hypoxia and anoxia, it also protects cells against reactive oxygen species thanks to its pseudoperoxidase activity.</text>
</comment>
<comment type="catalytic activity">
    <reaction evidence="1">
        <text>Fe(III)-heme b-[protein] + nitric oxide + H2O = Fe(II)-heme b-[protein] + nitrite + 2 H(+)</text>
        <dbReference type="Rhea" id="RHEA:77711"/>
        <dbReference type="Rhea" id="RHEA-COMP:18975"/>
        <dbReference type="Rhea" id="RHEA-COMP:18976"/>
        <dbReference type="ChEBI" id="CHEBI:15377"/>
        <dbReference type="ChEBI" id="CHEBI:15378"/>
        <dbReference type="ChEBI" id="CHEBI:16301"/>
        <dbReference type="ChEBI" id="CHEBI:16480"/>
        <dbReference type="ChEBI" id="CHEBI:55376"/>
        <dbReference type="ChEBI" id="CHEBI:60344"/>
    </reaction>
    <physiologicalReaction direction="right-to-left" evidence="1">
        <dbReference type="Rhea" id="RHEA:77713"/>
    </physiologicalReaction>
</comment>
<comment type="catalytic activity">
    <reaction evidence="1">
        <text>H2O2 + AH2 = A + 2 H2O</text>
        <dbReference type="Rhea" id="RHEA:30275"/>
        <dbReference type="ChEBI" id="CHEBI:13193"/>
        <dbReference type="ChEBI" id="CHEBI:15377"/>
        <dbReference type="ChEBI" id="CHEBI:16240"/>
        <dbReference type="ChEBI" id="CHEBI:17499"/>
    </reaction>
</comment>
<comment type="subunit">
    <text evidence="2">Monomeric.</text>
</comment>
<comment type="subcellular location">
    <subcellularLocation>
        <location evidence="1">Cytoplasm</location>
        <location evidence="1">Sarcoplasm</location>
    </subcellularLocation>
</comment>
<comment type="similarity">
    <text evidence="7">Belongs to the globin family.</text>
</comment>
<reference key="1">
    <citation type="journal article" date="1991" name="Bioorg. Khim.">
        <title>Amino acid sequence of myoglobin from seals from Lake Baikal.</title>
        <authorList>
            <person name="Baram G.I."/>
            <person name="Grachev M.A."/>
            <person name="Malikov N.G."/>
            <person name="Nazimov I.V."/>
            <person name="Shemyakin V.V."/>
        </authorList>
    </citation>
    <scope>PROTEIN SEQUENCE OF 2-154</scope>
</reference>
<feature type="initiator methionine" description="Removed" evidence="8">
    <location>
        <position position="1"/>
    </location>
</feature>
<feature type="chain" id="PRO_0000053333" description="Myoglobin">
    <location>
        <begin position="2"/>
        <end position="154"/>
    </location>
</feature>
<feature type="domain" description="Globin" evidence="7">
    <location>
        <begin position="2"/>
        <end position="148"/>
    </location>
</feature>
<feature type="binding site" evidence="5">
    <location>
        <position position="65"/>
    </location>
    <ligand>
        <name>nitrite</name>
        <dbReference type="ChEBI" id="CHEBI:16301"/>
    </ligand>
</feature>
<feature type="binding site" evidence="3 7">
    <location>
        <position position="65"/>
    </location>
    <ligand>
        <name>O2</name>
        <dbReference type="ChEBI" id="CHEBI:15379"/>
    </ligand>
</feature>
<feature type="binding site" description="proximal binding residue" evidence="1">
    <location>
        <position position="94"/>
    </location>
    <ligand>
        <name>heme b</name>
        <dbReference type="ChEBI" id="CHEBI:60344"/>
    </ligand>
    <ligandPart>
        <name>Fe</name>
        <dbReference type="ChEBI" id="CHEBI:18248"/>
    </ligandPart>
</feature>
<feature type="modified residue" description="Phosphoserine" evidence="6">
    <location>
        <position position="4"/>
    </location>
</feature>
<feature type="modified residue" description="Phosphothreonine" evidence="4">
    <location>
        <position position="68"/>
    </location>
</feature>
<dbReference type="EC" id="1.7.-.-" evidence="1"/>
<dbReference type="EC" id="1.11.1.-" evidence="1"/>
<dbReference type="PIR" id="JN0344">
    <property type="entry name" value="JN0344"/>
</dbReference>
<dbReference type="SMR" id="P30562"/>
<dbReference type="GO" id="GO:0070062">
    <property type="term" value="C:extracellular exosome"/>
    <property type="evidence" value="ECO:0007669"/>
    <property type="project" value="TreeGrafter"/>
</dbReference>
<dbReference type="GO" id="GO:0016528">
    <property type="term" value="C:sarcoplasm"/>
    <property type="evidence" value="ECO:0000250"/>
    <property type="project" value="UniProtKB"/>
</dbReference>
<dbReference type="GO" id="GO:0020037">
    <property type="term" value="F:heme binding"/>
    <property type="evidence" value="ECO:0007669"/>
    <property type="project" value="InterPro"/>
</dbReference>
<dbReference type="GO" id="GO:0046872">
    <property type="term" value="F:metal ion binding"/>
    <property type="evidence" value="ECO:0007669"/>
    <property type="project" value="UniProtKB-KW"/>
</dbReference>
<dbReference type="GO" id="GO:0098809">
    <property type="term" value="F:nitrite reductase activity"/>
    <property type="evidence" value="ECO:0000250"/>
    <property type="project" value="UniProtKB"/>
</dbReference>
<dbReference type="GO" id="GO:0019825">
    <property type="term" value="F:oxygen binding"/>
    <property type="evidence" value="ECO:0007669"/>
    <property type="project" value="InterPro"/>
</dbReference>
<dbReference type="GO" id="GO:0005344">
    <property type="term" value="F:oxygen carrier activity"/>
    <property type="evidence" value="ECO:0000250"/>
    <property type="project" value="UniProtKB"/>
</dbReference>
<dbReference type="GO" id="GO:0004601">
    <property type="term" value="F:peroxidase activity"/>
    <property type="evidence" value="ECO:0000250"/>
    <property type="project" value="UniProtKB"/>
</dbReference>
<dbReference type="GO" id="GO:0019430">
    <property type="term" value="P:removal of superoxide radicals"/>
    <property type="evidence" value="ECO:0000250"/>
    <property type="project" value="UniProtKB"/>
</dbReference>
<dbReference type="CDD" id="cd08926">
    <property type="entry name" value="Mb"/>
    <property type="match status" value="1"/>
</dbReference>
<dbReference type="Gene3D" id="6.10.140.2100">
    <property type="match status" value="1"/>
</dbReference>
<dbReference type="Gene3D" id="6.10.140.2110">
    <property type="match status" value="1"/>
</dbReference>
<dbReference type="InterPro" id="IPR000971">
    <property type="entry name" value="Globin"/>
</dbReference>
<dbReference type="InterPro" id="IPR009050">
    <property type="entry name" value="Globin-like_sf"/>
</dbReference>
<dbReference type="InterPro" id="IPR002335">
    <property type="entry name" value="Myoglobin"/>
</dbReference>
<dbReference type="PANTHER" id="PTHR47132">
    <property type="entry name" value="MYOGLOBIN"/>
    <property type="match status" value="1"/>
</dbReference>
<dbReference type="PANTHER" id="PTHR47132:SF1">
    <property type="entry name" value="MYOGLOBIN"/>
    <property type="match status" value="1"/>
</dbReference>
<dbReference type="Pfam" id="PF00042">
    <property type="entry name" value="Globin"/>
    <property type="match status" value="1"/>
</dbReference>
<dbReference type="PRINTS" id="PR00613">
    <property type="entry name" value="MYOGLOBIN"/>
</dbReference>
<dbReference type="SUPFAM" id="SSF46458">
    <property type="entry name" value="Globin-like"/>
    <property type="match status" value="1"/>
</dbReference>
<dbReference type="PROSITE" id="PS01033">
    <property type="entry name" value="GLOBIN"/>
    <property type="match status" value="1"/>
</dbReference>
<name>MYG_PUSSI</name>
<evidence type="ECO:0000250" key="1">
    <source>
        <dbReference type="UniProtKB" id="P02144"/>
    </source>
</evidence>
<evidence type="ECO:0000250" key="2">
    <source>
        <dbReference type="UniProtKB" id="P02185"/>
    </source>
</evidence>
<evidence type="ECO:0000250" key="3">
    <source>
        <dbReference type="UniProtKB" id="P02189"/>
    </source>
</evidence>
<evidence type="ECO:0000250" key="4">
    <source>
        <dbReference type="UniProtKB" id="P04247"/>
    </source>
</evidence>
<evidence type="ECO:0000250" key="5">
    <source>
        <dbReference type="UniProtKB" id="P68082"/>
    </source>
</evidence>
<evidence type="ECO:0000250" key="6">
    <source>
        <dbReference type="UniProtKB" id="Q9QZ76"/>
    </source>
</evidence>
<evidence type="ECO:0000255" key="7">
    <source>
        <dbReference type="PROSITE-ProRule" id="PRU00238"/>
    </source>
</evidence>
<evidence type="ECO:0000269" key="8">
    <source>
    </source>
</evidence>
<proteinExistence type="evidence at protein level"/>
<sequence>MGLSDGEWHLVLNVWGKWETDLAGHGQEVLIRLFKSHPETLEKFDKFKHLKSEDDMRRSFDLRKHGNTVLTALGGILKKKGHHEAELKPLAQSHATKHKIPIKYLEFISEAIIHVLHSKHPAEFGADAQAAMKKALELFRNDIAAKIKELGFHG</sequence>
<keyword id="KW-0963">Cytoplasm</keyword>
<keyword id="KW-0903">Direct protein sequencing</keyword>
<keyword id="KW-0349">Heme</keyword>
<keyword id="KW-0408">Iron</keyword>
<keyword id="KW-0479">Metal-binding</keyword>
<keyword id="KW-0514">Muscle protein</keyword>
<keyword id="KW-0560">Oxidoreductase</keyword>
<keyword id="KW-0561">Oxygen transport</keyword>
<keyword id="KW-0597">Phosphoprotein</keyword>
<keyword id="KW-0813">Transport</keyword>
<organism>
    <name type="scientific">Pusa sibirica</name>
    <name type="common">Baikal seal</name>
    <name type="synonym">Phoca sibirica</name>
    <dbReference type="NCBI Taxonomy" id="9719"/>
    <lineage>
        <taxon>Eukaryota</taxon>
        <taxon>Metazoa</taxon>
        <taxon>Chordata</taxon>
        <taxon>Craniata</taxon>
        <taxon>Vertebrata</taxon>
        <taxon>Euteleostomi</taxon>
        <taxon>Mammalia</taxon>
        <taxon>Eutheria</taxon>
        <taxon>Laurasiatheria</taxon>
        <taxon>Carnivora</taxon>
        <taxon>Caniformia</taxon>
        <taxon>Pinnipedia</taxon>
        <taxon>Phocidae</taxon>
        <taxon>Phocinae</taxon>
        <taxon>Pusa</taxon>
    </lineage>
</organism>
<accession>P30562</accession>
<protein>
    <recommendedName>
        <fullName>Myoglobin</fullName>
    </recommendedName>
    <alternativeName>
        <fullName evidence="1">Nitrite reductase MB</fullName>
        <ecNumber evidence="1">1.7.-.-</ecNumber>
    </alternativeName>
    <alternativeName>
        <fullName evidence="1">Pseudoperoxidase MB</fullName>
        <ecNumber evidence="1">1.11.1.-</ecNumber>
    </alternativeName>
</protein>
<gene>
    <name type="primary">MB</name>
</gene>